<evidence type="ECO:0000255" key="1">
    <source>
        <dbReference type="HAMAP-Rule" id="MF_00937"/>
    </source>
</evidence>
<evidence type="ECO:0000255" key="2">
    <source>
        <dbReference type="PROSITE-ProRule" id="PRU01384"/>
    </source>
</evidence>
<name>PARC_STRP8</name>
<gene>
    <name evidence="1" type="primary">parC</name>
    <name type="ordered locus">spyM18_0968</name>
</gene>
<dbReference type="EC" id="5.6.2.2" evidence="1"/>
<dbReference type="EMBL" id="AE009949">
    <property type="protein sequence ID" value="AAL97609.1"/>
    <property type="molecule type" value="Genomic_DNA"/>
</dbReference>
<dbReference type="RefSeq" id="WP_011017692.1">
    <property type="nucleotide sequence ID" value="NC_003485.1"/>
</dbReference>
<dbReference type="SMR" id="Q8P1B3"/>
<dbReference type="KEGG" id="spm:spyM18_0968"/>
<dbReference type="HOGENOM" id="CLU_002977_6_1_9"/>
<dbReference type="GO" id="GO:0005694">
    <property type="term" value="C:chromosome"/>
    <property type="evidence" value="ECO:0007669"/>
    <property type="project" value="InterPro"/>
</dbReference>
<dbReference type="GO" id="GO:0005737">
    <property type="term" value="C:cytoplasm"/>
    <property type="evidence" value="ECO:0007669"/>
    <property type="project" value="TreeGrafter"/>
</dbReference>
<dbReference type="GO" id="GO:0009330">
    <property type="term" value="C:DNA topoisomerase type II (double strand cut, ATP-hydrolyzing) complex"/>
    <property type="evidence" value="ECO:0007669"/>
    <property type="project" value="TreeGrafter"/>
</dbReference>
<dbReference type="GO" id="GO:0019897">
    <property type="term" value="C:extrinsic component of plasma membrane"/>
    <property type="evidence" value="ECO:0007669"/>
    <property type="project" value="UniProtKB-UniRule"/>
</dbReference>
<dbReference type="GO" id="GO:0005524">
    <property type="term" value="F:ATP binding"/>
    <property type="evidence" value="ECO:0007669"/>
    <property type="project" value="InterPro"/>
</dbReference>
<dbReference type="GO" id="GO:0003677">
    <property type="term" value="F:DNA binding"/>
    <property type="evidence" value="ECO:0007669"/>
    <property type="project" value="UniProtKB-UniRule"/>
</dbReference>
<dbReference type="GO" id="GO:0034335">
    <property type="term" value="F:DNA negative supercoiling activity"/>
    <property type="evidence" value="ECO:0007669"/>
    <property type="project" value="UniProtKB-ARBA"/>
</dbReference>
<dbReference type="GO" id="GO:0007059">
    <property type="term" value="P:chromosome segregation"/>
    <property type="evidence" value="ECO:0007669"/>
    <property type="project" value="UniProtKB-UniRule"/>
</dbReference>
<dbReference type="GO" id="GO:0006265">
    <property type="term" value="P:DNA topological change"/>
    <property type="evidence" value="ECO:0007669"/>
    <property type="project" value="UniProtKB-UniRule"/>
</dbReference>
<dbReference type="CDD" id="cd00187">
    <property type="entry name" value="TOP4c"/>
    <property type="match status" value="1"/>
</dbReference>
<dbReference type="FunFam" id="1.10.268.10:FF:000001">
    <property type="entry name" value="DNA gyrase subunit A"/>
    <property type="match status" value="1"/>
</dbReference>
<dbReference type="FunFam" id="3.30.1360.40:FF:000002">
    <property type="entry name" value="DNA gyrase subunit A"/>
    <property type="match status" value="1"/>
</dbReference>
<dbReference type="FunFam" id="3.90.199.10:FF:000001">
    <property type="entry name" value="DNA gyrase subunit A"/>
    <property type="match status" value="1"/>
</dbReference>
<dbReference type="FunFam" id="2.120.10.90:FF:000005">
    <property type="entry name" value="DNA topoisomerase 4 subunit A"/>
    <property type="match status" value="1"/>
</dbReference>
<dbReference type="Gene3D" id="3.30.1360.40">
    <property type="match status" value="1"/>
</dbReference>
<dbReference type="Gene3D" id="2.120.10.90">
    <property type="entry name" value="DNA gyrase/topoisomerase IV, subunit A, C-terminal"/>
    <property type="match status" value="1"/>
</dbReference>
<dbReference type="Gene3D" id="3.90.199.10">
    <property type="entry name" value="Topoisomerase II, domain 5"/>
    <property type="match status" value="1"/>
</dbReference>
<dbReference type="Gene3D" id="1.10.268.10">
    <property type="entry name" value="Topoisomerase, domain 3"/>
    <property type="match status" value="1"/>
</dbReference>
<dbReference type="HAMAP" id="MF_00937">
    <property type="entry name" value="ParC_type2"/>
    <property type="match status" value="1"/>
</dbReference>
<dbReference type="InterPro" id="IPR006691">
    <property type="entry name" value="GyrA/parC_rep"/>
</dbReference>
<dbReference type="InterPro" id="IPR035516">
    <property type="entry name" value="Gyrase/topoIV_suA_C"/>
</dbReference>
<dbReference type="InterPro" id="IPR013760">
    <property type="entry name" value="Topo_IIA-like_dom_sf"/>
</dbReference>
<dbReference type="InterPro" id="IPR013758">
    <property type="entry name" value="Topo_IIA_A/C_ab"/>
</dbReference>
<dbReference type="InterPro" id="IPR013757">
    <property type="entry name" value="Topo_IIA_A_a_sf"/>
</dbReference>
<dbReference type="InterPro" id="IPR002205">
    <property type="entry name" value="Topo_IIA_dom_A"/>
</dbReference>
<dbReference type="InterPro" id="IPR005741">
    <property type="entry name" value="TopoIV_A_Gpos"/>
</dbReference>
<dbReference type="InterPro" id="IPR050220">
    <property type="entry name" value="Type_II_DNA_Topoisomerases"/>
</dbReference>
<dbReference type="NCBIfam" id="TIGR01061">
    <property type="entry name" value="parC_Gpos"/>
    <property type="match status" value="1"/>
</dbReference>
<dbReference type="NCBIfam" id="NF004044">
    <property type="entry name" value="PRK05561.1"/>
    <property type="match status" value="1"/>
</dbReference>
<dbReference type="PANTHER" id="PTHR43493">
    <property type="entry name" value="DNA GYRASE/TOPOISOMERASE SUBUNIT A"/>
    <property type="match status" value="1"/>
</dbReference>
<dbReference type="PANTHER" id="PTHR43493:SF9">
    <property type="entry name" value="DNA TOPOISOMERASE 4 SUBUNIT A"/>
    <property type="match status" value="1"/>
</dbReference>
<dbReference type="Pfam" id="PF03989">
    <property type="entry name" value="DNA_gyraseA_C"/>
    <property type="match status" value="4"/>
</dbReference>
<dbReference type="Pfam" id="PF00521">
    <property type="entry name" value="DNA_topoisoIV"/>
    <property type="match status" value="1"/>
</dbReference>
<dbReference type="SMART" id="SM00434">
    <property type="entry name" value="TOP4c"/>
    <property type="match status" value="1"/>
</dbReference>
<dbReference type="SUPFAM" id="SSF101904">
    <property type="entry name" value="GyrA/ParC C-terminal domain-like"/>
    <property type="match status" value="1"/>
</dbReference>
<dbReference type="SUPFAM" id="SSF56719">
    <property type="entry name" value="Type II DNA topoisomerase"/>
    <property type="match status" value="1"/>
</dbReference>
<dbReference type="PROSITE" id="PS52040">
    <property type="entry name" value="TOPO_IIA"/>
    <property type="match status" value="1"/>
</dbReference>
<feature type="chain" id="PRO_0000145422" description="DNA topoisomerase 4 subunit A">
    <location>
        <begin position="1"/>
        <end position="819"/>
    </location>
</feature>
<feature type="domain" description="Topo IIA-type catalytic" evidence="2">
    <location>
        <begin position="30"/>
        <end position="496"/>
    </location>
</feature>
<feature type="active site" description="O-(5'-phospho-DNA)-tyrosine intermediate" evidence="1">
    <location>
        <position position="118"/>
    </location>
</feature>
<feature type="site" description="Interaction with DNA" evidence="1">
    <location>
        <position position="38"/>
    </location>
</feature>
<feature type="site" description="Interaction with DNA" evidence="1">
    <location>
        <position position="74"/>
    </location>
</feature>
<feature type="site" description="Interaction with DNA" evidence="1">
    <location>
        <position position="76"/>
    </location>
</feature>
<feature type="site" description="Interaction with DNA" evidence="1">
    <location>
        <position position="87"/>
    </location>
</feature>
<feature type="site" description="Interaction with DNA" evidence="1">
    <location>
        <position position="93"/>
    </location>
</feature>
<feature type="site" description="Transition state stabilizer" evidence="1">
    <location>
        <position position="117"/>
    </location>
</feature>
<proteinExistence type="inferred from homology"/>
<reference key="1">
    <citation type="journal article" date="2002" name="Proc. Natl. Acad. Sci. U.S.A.">
        <title>Genome sequence and comparative microarray analysis of serotype M18 group A Streptococcus strains associated with acute rheumatic fever outbreaks.</title>
        <authorList>
            <person name="Smoot J.C."/>
            <person name="Barbian K.D."/>
            <person name="Van Gompel J.J."/>
            <person name="Smoot L.M."/>
            <person name="Chaussee M.S."/>
            <person name="Sylva G.L."/>
            <person name="Sturdevant D.E."/>
            <person name="Ricklefs S.M."/>
            <person name="Porcella S.F."/>
            <person name="Parkins L.D."/>
            <person name="Beres S.B."/>
            <person name="Campbell D.S."/>
            <person name="Smith T.M."/>
            <person name="Zhang Q."/>
            <person name="Kapur V."/>
            <person name="Daly J.A."/>
            <person name="Veasy L.G."/>
            <person name="Musser J.M."/>
        </authorList>
    </citation>
    <scope>NUCLEOTIDE SEQUENCE [LARGE SCALE GENOMIC DNA]</scope>
    <source>
        <strain>MGAS8232</strain>
    </source>
</reference>
<sequence>MSNIQNMSLEDIMGERFGRYSKYIIQERALPDIRDGLKPVQRRILYSMNKDGNTFEKGYRKSAKSVGNIMGNFHPHGDSSIYDAMVRMSQDWKNREILVEMHGNNGSMDGDPPAAMRYTEARLSEIAGYLLQDIEKNTVPFAWNFDDTEKEPTVLPAAFPNLLVNGSSGISAGYATDIPPHNLSEVIDAVVYMIDHPKASLEKLMEFLPGPDFPTGGIIQGADEIKKAYETGKGRVVVRSRTEIEELKGGKQQIIVTEIPYEVNKAVLVKKIDDVRVNNKVPGIVEVRDESDRTGLRIAIELKKDADSQTILNYLLKYTDLQVNYNFNMVAIDHFTPRQVGLQKILSSYISHRKDIIIERSKFDKAKAEKRLHIVEGLIRVLSILDEIIALIRSSDNKADAKENLKVSYDFSEEQAEAIVTLQLYRLTNTDIVTLQNEENDLRDLITTLSAIIGDEATMYNVMKRELREVKKKFANPRLSELQAESQIIEIDTASLIAEEETFVSVTRGGYLKRTSPRSFNASSLEEVGKRDDDELIFVKQAKTTEHLLLFTTLGNVIYRPIHELTDLRWKDIGEHLSQTISNFATEEEILYADIVTSFDQGLYVAVTQNGFIKRFDRKELSPWRTYKSKSTKYVKLKDDKDRVVTLSPVIMEDLLLVTKNGYALRFSSQEVPIQGLKSAGVKGINLKNDDSLASAFAVTSNSFFVLTQRGSLKRMAVDDIPQTSRANRGLLVLRELKTKPHRVFLAGGVQSDTSAEQFDLFTDIPEEETNQQMLEVISKTGQTYEIALETLSLSERTSNGSFISDTISDQEVLVARTR</sequence>
<comment type="function">
    <text evidence="1">Topoisomerase IV is essential for chromosome segregation. It relaxes supercoiled DNA. Performs the decatenation events required during the replication of a circular DNA molecule.</text>
</comment>
<comment type="catalytic activity">
    <reaction evidence="1">
        <text>ATP-dependent breakage, passage and rejoining of double-stranded DNA.</text>
        <dbReference type="EC" id="5.6.2.2"/>
    </reaction>
</comment>
<comment type="subunit">
    <text evidence="1">Heterotetramer composed of ParC and ParE.</text>
</comment>
<comment type="subcellular location">
    <subcellularLocation>
        <location evidence="1">Cell membrane</location>
        <topology evidence="1">Peripheral membrane protein</topology>
    </subcellularLocation>
</comment>
<comment type="similarity">
    <text evidence="1">Belongs to the type II topoisomerase GyrA/ParC subunit family. ParC type 2 subfamily.</text>
</comment>
<accession>Q8P1B3</accession>
<organism>
    <name type="scientific">Streptococcus pyogenes serotype M18 (strain MGAS8232)</name>
    <dbReference type="NCBI Taxonomy" id="186103"/>
    <lineage>
        <taxon>Bacteria</taxon>
        <taxon>Bacillati</taxon>
        <taxon>Bacillota</taxon>
        <taxon>Bacilli</taxon>
        <taxon>Lactobacillales</taxon>
        <taxon>Streptococcaceae</taxon>
        <taxon>Streptococcus</taxon>
    </lineage>
</organism>
<protein>
    <recommendedName>
        <fullName evidence="1">DNA topoisomerase 4 subunit A</fullName>
        <ecNumber evidence="1">5.6.2.2</ecNumber>
    </recommendedName>
    <alternativeName>
        <fullName evidence="1">Topoisomerase IV subunit A</fullName>
    </alternativeName>
</protein>
<keyword id="KW-1003">Cell membrane</keyword>
<keyword id="KW-0238">DNA-binding</keyword>
<keyword id="KW-0413">Isomerase</keyword>
<keyword id="KW-0472">Membrane</keyword>
<keyword id="KW-0799">Topoisomerase</keyword>